<reference key="1">
    <citation type="journal article" date="2009" name="J. Bacteriol.">
        <title>Complete and draft genome sequences of six members of the Aquificales.</title>
        <authorList>
            <person name="Reysenbach A.-L."/>
            <person name="Hamamura N."/>
            <person name="Podar M."/>
            <person name="Griffiths E."/>
            <person name="Ferreira S."/>
            <person name="Hochstein R."/>
            <person name="Heidelberg J."/>
            <person name="Johnson J."/>
            <person name="Mead D."/>
            <person name="Pohorille A."/>
            <person name="Sarmiento M."/>
            <person name="Schweighofer K."/>
            <person name="Seshadri R."/>
            <person name="Voytek M.A."/>
        </authorList>
    </citation>
    <scope>NUCLEOTIDE SEQUENCE [LARGE SCALE GENOMIC DNA]</scope>
    <source>
        <strain>Y04AAS1</strain>
    </source>
</reference>
<gene>
    <name evidence="1" type="primary">rplU</name>
    <name type="ordered locus">HY04AAS1_0109</name>
</gene>
<comment type="function">
    <text evidence="1">This protein binds to 23S rRNA in the presence of protein L20.</text>
</comment>
<comment type="subunit">
    <text evidence="1">Part of the 50S ribosomal subunit. Contacts protein L20.</text>
</comment>
<comment type="similarity">
    <text evidence="1">Belongs to the bacterial ribosomal protein bL21 family.</text>
</comment>
<evidence type="ECO:0000255" key="1">
    <source>
        <dbReference type="HAMAP-Rule" id="MF_01363"/>
    </source>
</evidence>
<evidence type="ECO:0000305" key="2"/>
<sequence length="96" mass="10809">MYAVIETGSKQYLVKEGDVLKVEKLPFGENEEIELPALNIVKDGTVKFGGKVKAKVLSTAKDKKVLIFKHLPKKHSKKLRGHRQFYTKISILSIGE</sequence>
<keyword id="KW-0687">Ribonucleoprotein</keyword>
<keyword id="KW-0689">Ribosomal protein</keyword>
<keyword id="KW-0694">RNA-binding</keyword>
<keyword id="KW-0699">rRNA-binding</keyword>
<feature type="chain" id="PRO_1000143810" description="Large ribosomal subunit protein bL21">
    <location>
        <begin position="1"/>
        <end position="96"/>
    </location>
</feature>
<organism>
    <name type="scientific">Hydrogenobaculum sp. (strain Y04AAS1)</name>
    <dbReference type="NCBI Taxonomy" id="380749"/>
    <lineage>
        <taxon>Bacteria</taxon>
        <taxon>Pseudomonadati</taxon>
        <taxon>Aquificota</taxon>
        <taxon>Aquificia</taxon>
        <taxon>Aquificales</taxon>
        <taxon>Aquificaceae</taxon>
        <taxon>Hydrogenobaculum</taxon>
    </lineage>
</organism>
<protein>
    <recommendedName>
        <fullName evidence="1">Large ribosomal subunit protein bL21</fullName>
    </recommendedName>
    <alternativeName>
        <fullName evidence="2">50S ribosomal protein L21</fullName>
    </alternativeName>
</protein>
<accession>B4U6N3</accession>
<name>RL21_HYDS0</name>
<proteinExistence type="inferred from homology"/>
<dbReference type="EMBL" id="CP001130">
    <property type="protein sequence ID" value="ACG56801.1"/>
    <property type="molecule type" value="Genomic_DNA"/>
</dbReference>
<dbReference type="RefSeq" id="WP_012513158.1">
    <property type="nucleotide sequence ID" value="NC_011126.1"/>
</dbReference>
<dbReference type="SMR" id="B4U6N3"/>
<dbReference type="STRING" id="380749.HY04AAS1_0109"/>
<dbReference type="KEGG" id="hya:HY04AAS1_0109"/>
<dbReference type="eggNOG" id="COG0261">
    <property type="taxonomic scope" value="Bacteria"/>
</dbReference>
<dbReference type="HOGENOM" id="CLU_061463_3_2_0"/>
<dbReference type="OrthoDB" id="9813334at2"/>
<dbReference type="GO" id="GO:0005737">
    <property type="term" value="C:cytoplasm"/>
    <property type="evidence" value="ECO:0007669"/>
    <property type="project" value="UniProtKB-ARBA"/>
</dbReference>
<dbReference type="GO" id="GO:1990904">
    <property type="term" value="C:ribonucleoprotein complex"/>
    <property type="evidence" value="ECO:0007669"/>
    <property type="project" value="UniProtKB-KW"/>
</dbReference>
<dbReference type="GO" id="GO:0005840">
    <property type="term" value="C:ribosome"/>
    <property type="evidence" value="ECO:0007669"/>
    <property type="project" value="UniProtKB-KW"/>
</dbReference>
<dbReference type="GO" id="GO:0019843">
    <property type="term" value="F:rRNA binding"/>
    <property type="evidence" value="ECO:0007669"/>
    <property type="project" value="UniProtKB-UniRule"/>
</dbReference>
<dbReference type="GO" id="GO:0003735">
    <property type="term" value="F:structural constituent of ribosome"/>
    <property type="evidence" value="ECO:0007669"/>
    <property type="project" value="InterPro"/>
</dbReference>
<dbReference type="GO" id="GO:0006412">
    <property type="term" value="P:translation"/>
    <property type="evidence" value="ECO:0007669"/>
    <property type="project" value="UniProtKB-UniRule"/>
</dbReference>
<dbReference type="HAMAP" id="MF_01363">
    <property type="entry name" value="Ribosomal_bL21"/>
    <property type="match status" value="1"/>
</dbReference>
<dbReference type="InterPro" id="IPR028909">
    <property type="entry name" value="bL21-like"/>
</dbReference>
<dbReference type="InterPro" id="IPR036164">
    <property type="entry name" value="bL21-like_sf"/>
</dbReference>
<dbReference type="InterPro" id="IPR001787">
    <property type="entry name" value="Ribosomal_bL21"/>
</dbReference>
<dbReference type="InterPro" id="IPR018258">
    <property type="entry name" value="Ribosomal_bL21_CS"/>
</dbReference>
<dbReference type="NCBIfam" id="TIGR00061">
    <property type="entry name" value="L21"/>
    <property type="match status" value="1"/>
</dbReference>
<dbReference type="PANTHER" id="PTHR21349">
    <property type="entry name" value="50S RIBOSOMAL PROTEIN L21"/>
    <property type="match status" value="1"/>
</dbReference>
<dbReference type="PANTHER" id="PTHR21349:SF0">
    <property type="entry name" value="LARGE RIBOSOMAL SUBUNIT PROTEIN BL21M"/>
    <property type="match status" value="1"/>
</dbReference>
<dbReference type="Pfam" id="PF00829">
    <property type="entry name" value="Ribosomal_L21p"/>
    <property type="match status" value="1"/>
</dbReference>
<dbReference type="SUPFAM" id="SSF141091">
    <property type="entry name" value="L21p-like"/>
    <property type="match status" value="1"/>
</dbReference>
<dbReference type="PROSITE" id="PS01169">
    <property type="entry name" value="RIBOSOMAL_L21"/>
    <property type="match status" value="1"/>
</dbReference>